<gene>
    <name type="primary">PLAUR</name>
    <name type="synonym">UPAR</name>
</gene>
<reference key="1">
    <citation type="journal article" date="2001" name="Biol. Chem.">
        <title>Differential binding of urokinase and peptide antagonists to the urokinase receptor: evidence from characterization of the receptor in four primate species.</title>
        <authorList>
            <person name="Engelholm L.H."/>
            <person name="Behrendt N."/>
        </authorList>
    </citation>
    <scope>NUCLEOTIDE SEQUENCE [MRNA]</scope>
    <source>
        <tissue>Skin</tissue>
    </source>
</reference>
<organism>
    <name type="scientific">Pan troglodytes</name>
    <name type="common">Chimpanzee</name>
    <dbReference type="NCBI Taxonomy" id="9598"/>
    <lineage>
        <taxon>Eukaryota</taxon>
        <taxon>Metazoa</taxon>
        <taxon>Chordata</taxon>
        <taxon>Craniata</taxon>
        <taxon>Vertebrata</taxon>
        <taxon>Euteleostomi</taxon>
        <taxon>Mammalia</taxon>
        <taxon>Eutheria</taxon>
        <taxon>Euarchontoglires</taxon>
        <taxon>Primates</taxon>
        <taxon>Haplorrhini</taxon>
        <taxon>Catarrhini</taxon>
        <taxon>Hominidae</taxon>
        <taxon>Pan</taxon>
    </lineage>
</organism>
<feature type="signal peptide" evidence="1">
    <location>
        <begin position="1"/>
        <end position="22"/>
    </location>
</feature>
<feature type="chain" id="PRO_0000036094" description="Urokinase plasminogen activator surface receptor">
    <location>
        <begin position="23"/>
        <end position="305" status="uncertain"/>
    </location>
</feature>
<feature type="propeptide" id="PRO_0000036095" description="Removed in mature form" evidence="4">
    <location>
        <begin position="306" status="uncertain"/>
        <end position="335"/>
    </location>
</feature>
<feature type="domain" description="UPAR/Ly6 1">
    <location>
        <begin position="23"/>
        <end position="114"/>
    </location>
</feature>
<feature type="domain" description="UPAR/Ly6 2">
    <location>
        <begin position="115"/>
        <end position="213"/>
    </location>
</feature>
<feature type="domain" description="UPAR/Ly6 3">
    <location>
        <begin position="214"/>
        <end position="305"/>
    </location>
</feature>
<feature type="site" description="Cleavage; by U-PA" evidence="1">
    <location>
        <begin position="105"/>
        <end position="106"/>
    </location>
</feature>
<feature type="site" description="Cleavage; by U-PA" evidence="1">
    <location>
        <begin position="111"/>
        <end position="112"/>
    </location>
</feature>
<feature type="lipid moiety-binding region" description="GPI-anchor amidated glycine" evidence="4">
    <location>
        <position position="305"/>
    </location>
</feature>
<feature type="glycosylation site" description="N-linked (GlcNAc...) asparagine" evidence="4">
    <location>
        <position position="74"/>
    </location>
</feature>
<feature type="glycosylation site" description="N-linked (GlcNAc...) asparagine" evidence="4">
    <location>
        <position position="124"/>
    </location>
</feature>
<feature type="glycosylation site" description="N-linked (GlcNAc...) asparagine" evidence="4">
    <location>
        <position position="184"/>
    </location>
</feature>
<feature type="glycosylation site" description="N-linked (GlcNAc...) asparagine" evidence="4">
    <location>
        <position position="194"/>
    </location>
</feature>
<feature type="glycosylation site" description="N-linked (GlcNAc...) asparagine" evidence="4">
    <location>
        <position position="222"/>
    </location>
</feature>
<feature type="glycosylation site" description="N-linked (GlcNAc...) asparagine" evidence="4">
    <location>
        <position position="255"/>
    </location>
</feature>
<feature type="disulfide bond" evidence="3">
    <location>
        <begin position="25"/>
        <end position="46"/>
    </location>
</feature>
<feature type="disulfide bond" evidence="3">
    <location>
        <begin position="28"/>
        <end position="34"/>
    </location>
</feature>
<feature type="disulfide bond" evidence="3">
    <location>
        <begin position="39"/>
        <end position="67"/>
    </location>
</feature>
<feature type="disulfide bond" evidence="3">
    <location>
        <begin position="93"/>
        <end position="98"/>
    </location>
</feature>
<feature type="disulfide bond" evidence="3">
    <location>
        <begin position="117"/>
        <end position="144"/>
    </location>
</feature>
<feature type="disulfide bond" evidence="3">
    <location>
        <begin position="120"/>
        <end position="127"/>
    </location>
</feature>
<feature type="disulfide bond" evidence="3">
    <location>
        <begin position="137"/>
        <end position="169"/>
    </location>
</feature>
<feature type="disulfide bond" evidence="3">
    <location>
        <begin position="175"/>
        <end position="192"/>
    </location>
</feature>
<feature type="disulfide bond" evidence="3">
    <location>
        <begin position="193"/>
        <end position="198"/>
    </location>
</feature>
<feature type="disulfide bond" evidence="3">
    <location>
        <begin position="216"/>
        <end position="244"/>
    </location>
</feature>
<feature type="disulfide bond" evidence="3">
    <location>
        <begin position="219"/>
        <end position="227"/>
    </location>
</feature>
<feature type="disulfide bond" evidence="3">
    <location>
        <begin position="237"/>
        <end position="263"/>
    </location>
</feature>
<feature type="disulfide bond" evidence="3">
    <location>
        <begin position="269"/>
        <end position="287"/>
    </location>
</feature>
<feature type="disulfide bond" evidence="3">
    <location>
        <begin position="288"/>
        <end position="293"/>
    </location>
</feature>
<evidence type="ECO:0000250" key="1"/>
<evidence type="ECO:0000250" key="2">
    <source>
        <dbReference type="UniProtKB" id="P49616"/>
    </source>
</evidence>
<evidence type="ECO:0000250" key="3">
    <source>
        <dbReference type="UniProtKB" id="Q03405"/>
    </source>
</evidence>
<evidence type="ECO:0000255" key="4"/>
<evidence type="ECO:0000305" key="5"/>
<keyword id="KW-0965">Cell junction</keyword>
<keyword id="KW-1003">Cell membrane</keyword>
<keyword id="KW-0966">Cell projection</keyword>
<keyword id="KW-1015">Disulfide bond</keyword>
<keyword id="KW-0325">Glycoprotein</keyword>
<keyword id="KW-0336">GPI-anchor</keyword>
<keyword id="KW-0449">Lipoprotein</keyword>
<keyword id="KW-0472">Membrane</keyword>
<keyword id="KW-0675">Receptor</keyword>
<keyword id="KW-1185">Reference proteome</keyword>
<keyword id="KW-0677">Repeat</keyword>
<keyword id="KW-0732">Signal</keyword>
<comment type="function">
    <text evidence="1">Acts as a receptor for urokinase plasminogen activator. Plays a role in localizing and promoting plasmin formation. Mediates the proteolysis-independent signal transduction activation effects of U-PA. It is subject to negative-feedback regulation by U-PA which cleaves it into an inactive form (By similarity).</text>
</comment>
<comment type="subunit">
    <text evidence="3 5">Monomer (Probable). Interacts (via the UPAR/Ly6 domains) with SRPX2. Interacts with MRC2. Interacts with FAP (seprase); the interaction occurs at the cell surface of invadopodia membrane. Interacts with SORL1 (via N-terminal ectodomain); this interaction decreases PLAUR internalization (By similarity). The ternary complex composed of PLAUR-PLAU-SERPINE1 also interacts with SORL1 (By similarity). Interacts with CD82; this interaction prevents PLAUR from binding to its high affinity ligand PLAU (By similarity).</text>
</comment>
<comment type="subcellular location">
    <subcellularLocation>
        <location evidence="3">Cell membrane</location>
    </subcellularLocation>
    <subcellularLocation>
        <location evidence="3">Cell projection</location>
        <location evidence="3">Invadopodium membrane</location>
    </subcellularLocation>
    <subcellularLocation>
        <location evidence="2">Cell membrane</location>
        <topology evidence="2">Lipid-anchor</topology>
        <topology evidence="2">GPI-anchor</topology>
    </subcellularLocation>
    <text evidence="3">Colocalized with FAP (seprase) preferentially at the cell surface of invadopodia membrane in a cytoskeleton-, integrin- and vitronectin-dependent manner (By similarity).</text>
</comment>
<protein>
    <recommendedName>
        <fullName>Urokinase plasminogen activator surface receptor</fullName>
        <shortName>U-PAR</shortName>
        <shortName>uPAR</shortName>
    </recommendedName>
    <cdAntigenName>CD87</cdAntigenName>
</protein>
<sequence>MGHPPLLPLLLLLHTCVPASWGLRCMQCKTNGDCRVEECALGQDLCRTTIVRMWEEGEELELVEKSCTHSEKTNRTLSYRTGLKITSLTEVVCGLDLCNQGNSGRAVTYSRSRYLECISCGSSNMSCERGRHQSLQCRNPEEQCLDVVTHWIQEGEEGRPKDDRHLRGCGYLPGCPGSNGFHNNDTFHFLKCCNTTKCNEGPILELENLPQNGRQCYSCKGNSTHGCSSEETFLIDCRGPMNQCLVATGTHEPKNQSYMVRGCATASMCQHAHLGDAFSMNHIDVSCCTKSGCNHPDLDVQYRSGAAPQPGPAHLSLTITLLMTARLWGGTLLWT</sequence>
<dbReference type="EMBL" id="AF302071">
    <property type="protein sequence ID" value="AAG40759.1"/>
    <property type="molecule type" value="mRNA"/>
</dbReference>
<dbReference type="RefSeq" id="NP_001009031.1">
    <property type="nucleotide sequence ID" value="NM_001009031.1"/>
</dbReference>
<dbReference type="SMR" id="Q9GK80"/>
<dbReference type="FunCoup" id="Q9GK80">
    <property type="interactions" value="240"/>
</dbReference>
<dbReference type="STRING" id="9598.ENSPTRP00000054428"/>
<dbReference type="GlyCosmos" id="Q9GK80">
    <property type="glycosylation" value="6 sites, No reported glycans"/>
</dbReference>
<dbReference type="GeneID" id="450103"/>
<dbReference type="KEGG" id="ptr:450103"/>
<dbReference type="CTD" id="5329"/>
<dbReference type="InParanoid" id="Q9GK80"/>
<dbReference type="OrthoDB" id="6775at9604"/>
<dbReference type="Proteomes" id="UP000002277">
    <property type="component" value="Unplaced"/>
</dbReference>
<dbReference type="GO" id="GO:0070161">
    <property type="term" value="C:anchoring junction"/>
    <property type="evidence" value="ECO:0007669"/>
    <property type="project" value="UniProtKB-KW"/>
</dbReference>
<dbReference type="GO" id="GO:0042995">
    <property type="term" value="C:cell projection"/>
    <property type="evidence" value="ECO:0007669"/>
    <property type="project" value="UniProtKB-SubCell"/>
</dbReference>
<dbReference type="GO" id="GO:0005886">
    <property type="term" value="C:plasma membrane"/>
    <property type="evidence" value="ECO:0000318"/>
    <property type="project" value="GO_Central"/>
</dbReference>
<dbReference type="GO" id="GO:0098552">
    <property type="term" value="C:side of membrane"/>
    <property type="evidence" value="ECO:0007669"/>
    <property type="project" value="UniProtKB-KW"/>
</dbReference>
<dbReference type="CDD" id="cd23556">
    <property type="entry name" value="TFP_LU_ECD_uPAR_rpt1"/>
    <property type="match status" value="1"/>
</dbReference>
<dbReference type="CDD" id="cd23557">
    <property type="entry name" value="TFP_LU_ECD_uPAR_rpt2"/>
    <property type="match status" value="1"/>
</dbReference>
<dbReference type="CDD" id="cd23558">
    <property type="entry name" value="TFP_LU_ECD_uPAR_rpt3"/>
    <property type="match status" value="1"/>
</dbReference>
<dbReference type="FunFam" id="2.10.60.10:FF:000013">
    <property type="entry name" value="Urokinase plasminogen activator surface receptor"/>
    <property type="match status" value="1"/>
</dbReference>
<dbReference type="FunFam" id="2.10.60.10:FF:000015">
    <property type="entry name" value="Urokinase plasminogen activator surface receptor"/>
    <property type="match status" value="1"/>
</dbReference>
<dbReference type="FunFam" id="2.10.60.10:FF:000019">
    <property type="entry name" value="Urokinase plasminogen activator surface receptor"/>
    <property type="match status" value="1"/>
</dbReference>
<dbReference type="Gene3D" id="2.10.60.10">
    <property type="entry name" value="CD59"/>
    <property type="match status" value="3"/>
</dbReference>
<dbReference type="InterPro" id="IPR018363">
    <property type="entry name" value="CD59_antigen_CS"/>
</dbReference>
<dbReference type="InterPro" id="IPR016054">
    <property type="entry name" value="LY6_UPA_recep-like"/>
</dbReference>
<dbReference type="InterPro" id="IPR045860">
    <property type="entry name" value="Snake_toxin-like_sf"/>
</dbReference>
<dbReference type="PANTHER" id="PTHR10624:SF6">
    <property type="entry name" value="UROKINASE PLASMINOGEN ACTIVATOR SURFACE RECEPTOR"/>
    <property type="match status" value="1"/>
</dbReference>
<dbReference type="PANTHER" id="PTHR10624">
    <property type="entry name" value="UROKINASE PLASMINOGEN ACTIVATOR SURFACE RECEPTOR-RELATED"/>
    <property type="match status" value="1"/>
</dbReference>
<dbReference type="Pfam" id="PF00021">
    <property type="entry name" value="UPAR_LY6"/>
    <property type="match status" value="3"/>
</dbReference>
<dbReference type="SMART" id="SM00134">
    <property type="entry name" value="LU"/>
    <property type="match status" value="3"/>
</dbReference>
<dbReference type="SUPFAM" id="SSF57302">
    <property type="entry name" value="Snake toxin-like"/>
    <property type="match status" value="3"/>
</dbReference>
<dbReference type="PROSITE" id="PS00983">
    <property type="entry name" value="LY6_UPAR"/>
    <property type="match status" value="3"/>
</dbReference>
<proteinExistence type="evidence at transcript level"/>
<name>UPAR_PANTR</name>
<accession>Q9GK80</accession>